<keyword id="KW-1185">Reference proteome</keyword>
<keyword id="KW-0687">Ribonucleoprotein</keyword>
<keyword id="KW-0689">Ribosomal protein</keyword>
<keyword id="KW-0694">RNA-binding</keyword>
<keyword id="KW-0699">rRNA-binding</keyword>
<reference key="1">
    <citation type="journal article" date="2005" name="Proc. Natl. Acad. Sci. U.S.A.">
        <title>Whole genome sequence of Staphylococcus saprophyticus reveals the pathogenesis of uncomplicated urinary tract infection.</title>
        <authorList>
            <person name="Kuroda M."/>
            <person name="Yamashita A."/>
            <person name="Hirakawa H."/>
            <person name="Kumano M."/>
            <person name="Morikawa K."/>
            <person name="Higashide M."/>
            <person name="Maruyama A."/>
            <person name="Inose Y."/>
            <person name="Matoba K."/>
            <person name="Toh H."/>
            <person name="Kuhara S."/>
            <person name="Hattori M."/>
            <person name="Ohta T."/>
        </authorList>
    </citation>
    <scope>NUCLEOTIDE SEQUENCE [LARGE SCALE GENOMIC DNA]</scope>
    <source>
        <strain>ATCC 15305 / DSM 20229 / NCIMB 8711 / NCTC 7292 / S-41</strain>
    </source>
</reference>
<gene>
    <name evidence="1" type="primary">rpsO</name>
    <name type="ordered locus">SSP1492</name>
</gene>
<name>RS15_STAS1</name>
<comment type="function">
    <text evidence="1">One of the primary rRNA binding proteins, it binds directly to 16S rRNA where it helps nucleate assembly of the platform of the 30S subunit by binding and bridging several RNA helices of the 16S rRNA.</text>
</comment>
<comment type="function">
    <text evidence="1">Forms an intersubunit bridge (bridge B4) with the 23S rRNA of the 50S subunit in the ribosome.</text>
</comment>
<comment type="subunit">
    <text evidence="1">Part of the 30S ribosomal subunit. Forms a bridge to the 50S subunit in the 70S ribosome, contacting the 23S rRNA.</text>
</comment>
<comment type="similarity">
    <text evidence="1">Belongs to the universal ribosomal protein uS15 family.</text>
</comment>
<feature type="chain" id="PRO_0000115548" description="Small ribosomal subunit protein uS15">
    <location>
        <begin position="1"/>
        <end position="89"/>
    </location>
</feature>
<accession>Q49X61</accession>
<evidence type="ECO:0000255" key="1">
    <source>
        <dbReference type="HAMAP-Rule" id="MF_01343"/>
    </source>
</evidence>
<evidence type="ECO:0000305" key="2"/>
<protein>
    <recommendedName>
        <fullName evidence="1">Small ribosomal subunit protein uS15</fullName>
    </recommendedName>
    <alternativeName>
        <fullName evidence="2">30S ribosomal protein S15</fullName>
    </alternativeName>
</protein>
<organism>
    <name type="scientific">Staphylococcus saprophyticus subsp. saprophyticus (strain ATCC 15305 / DSM 20229 / NCIMB 8711 / NCTC 7292 / S-41)</name>
    <dbReference type="NCBI Taxonomy" id="342451"/>
    <lineage>
        <taxon>Bacteria</taxon>
        <taxon>Bacillati</taxon>
        <taxon>Bacillota</taxon>
        <taxon>Bacilli</taxon>
        <taxon>Bacillales</taxon>
        <taxon>Staphylococcaceae</taxon>
        <taxon>Staphylococcus</taxon>
    </lineage>
</organism>
<dbReference type="EMBL" id="AP008934">
    <property type="protein sequence ID" value="BAE18637.1"/>
    <property type="molecule type" value="Genomic_DNA"/>
</dbReference>
<dbReference type="RefSeq" id="WP_002483448.1">
    <property type="nucleotide sequence ID" value="NZ_MTGA01000034.1"/>
</dbReference>
<dbReference type="SMR" id="Q49X61"/>
<dbReference type="GeneID" id="66867705"/>
<dbReference type="KEGG" id="ssp:SSP1492"/>
<dbReference type="eggNOG" id="COG0184">
    <property type="taxonomic scope" value="Bacteria"/>
</dbReference>
<dbReference type="HOGENOM" id="CLU_148518_0_0_9"/>
<dbReference type="OrthoDB" id="9799262at2"/>
<dbReference type="Proteomes" id="UP000006371">
    <property type="component" value="Chromosome"/>
</dbReference>
<dbReference type="GO" id="GO:0022627">
    <property type="term" value="C:cytosolic small ribosomal subunit"/>
    <property type="evidence" value="ECO:0007669"/>
    <property type="project" value="TreeGrafter"/>
</dbReference>
<dbReference type="GO" id="GO:0019843">
    <property type="term" value="F:rRNA binding"/>
    <property type="evidence" value="ECO:0007669"/>
    <property type="project" value="UniProtKB-UniRule"/>
</dbReference>
<dbReference type="GO" id="GO:0003735">
    <property type="term" value="F:structural constituent of ribosome"/>
    <property type="evidence" value="ECO:0007669"/>
    <property type="project" value="InterPro"/>
</dbReference>
<dbReference type="GO" id="GO:0006412">
    <property type="term" value="P:translation"/>
    <property type="evidence" value="ECO:0007669"/>
    <property type="project" value="UniProtKB-UniRule"/>
</dbReference>
<dbReference type="CDD" id="cd00353">
    <property type="entry name" value="Ribosomal_S15p_S13e"/>
    <property type="match status" value="1"/>
</dbReference>
<dbReference type="FunFam" id="1.10.287.10:FF:000002">
    <property type="entry name" value="30S ribosomal protein S15"/>
    <property type="match status" value="1"/>
</dbReference>
<dbReference type="Gene3D" id="6.10.250.3130">
    <property type="match status" value="1"/>
</dbReference>
<dbReference type="Gene3D" id="1.10.287.10">
    <property type="entry name" value="S15/NS1, RNA-binding"/>
    <property type="match status" value="1"/>
</dbReference>
<dbReference type="HAMAP" id="MF_01343_B">
    <property type="entry name" value="Ribosomal_uS15_B"/>
    <property type="match status" value="1"/>
</dbReference>
<dbReference type="InterPro" id="IPR000589">
    <property type="entry name" value="Ribosomal_uS15"/>
</dbReference>
<dbReference type="InterPro" id="IPR005290">
    <property type="entry name" value="Ribosomal_uS15_bac-type"/>
</dbReference>
<dbReference type="InterPro" id="IPR009068">
    <property type="entry name" value="uS15_NS1_RNA-bd_sf"/>
</dbReference>
<dbReference type="NCBIfam" id="TIGR00952">
    <property type="entry name" value="S15_bact"/>
    <property type="match status" value="1"/>
</dbReference>
<dbReference type="PANTHER" id="PTHR23321">
    <property type="entry name" value="RIBOSOMAL PROTEIN S15, BACTERIAL AND ORGANELLAR"/>
    <property type="match status" value="1"/>
</dbReference>
<dbReference type="PANTHER" id="PTHR23321:SF26">
    <property type="entry name" value="SMALL RIBOSOMAL SUBUNIT PROTEIN US15M"/>
    <property type="match status" value="1"/>
</dbReference>
<dbReference type="Pfam" id="PF00312">
    <property type="entry name" value="Ribosomal_S15"/>
    <property type="match status" value="1"/>
</dbReference>
<dbReference type="SMART" id="SM01387">
    <property type="entry name" value="Ribosomal_S15"/>
    <property type="match status" value="1"/>
</dbReference>
<dbReference type="SUPFAM" id="SSF47060">
    <property type="entry name" value="S15/NS1 RNA-binding domain"/>
    <property type="match status" value="1"/>
</dbReference>
<dbReference type="PROSITE" id="PS00362">
    <property type="entry name" value="RIBOSOMAL_S15"/>
    <property type="match status" value="1"/>
</dbReference>
<sequence>MAISQERKNELIKEYRTHEADTGSPEVQIAVLTAEITALNEHLREHKKDHHSRRGLLKMVGRRRHLLNYLRDKDVQRYRELIKSLGIRR</sequence>
<proteinExistence type="inferred from homology"/>